<keyword id="KW-0687">Ribonucleoprotein</keyword>
<keyword id="KW-0689">Ribosomal protein</keyword>
<keyword id="KW-0694">RNA-binding</keyword>
<keyword id="KW-0699">rRNA-binding</keyword>
<name>RL2_STAA9</name>
<protein>
    <recommendedName>
        <fullName evidence="1">Large ribosomal subunit protein uL2</fullName>
    </recommendedName>
    <alternativeName>
        <fullName evidence="3">50S ribosomal protein L2</fullName>
    </alternativeName>
</protein>
<evidence type="ECO:0000255" key="1">
    <source>
        <dbReference type="HAMAP-Rule" id="MF_01320"/>
    </source>
</evidence>
<evidence type="ECO:0000256" key="2">
    <source>
        <dbReference type="SAM" id="MobiDB-lite"/>
    </source>
</evidence>
<evidence type="ECO:0000305" key="3"/>
<proteinExistence type="inferred from homology"/>
<reference key="1">
    <citation type="submission" date="2007-05" db="EMBL/GenBank/DDBJ databases">
        <title>Complete sequence of chromosome of Staphylococcus aureus subsp. aureus JH9.</title>
        <authorList>
            <consortium name="US DOE Joint Genome Institute"/>
            <person name="Copeland A."/>
            <person name="Lucas S."/>
            <person name="Lapidus A."/>
            <person name="Barry K."/>
            <person name="Detter J.C."/>
            <person name="Glavina del Rio T."/>
            <person name="Hammon N."/>
            <person name="Israni S."/>
            <person name="Pitluck S."/>
            <person name="Chain P."/>
            <person name="Malfatti S."/>
            <person name="Shin M."/>
            <person name="Vergez L."/>
            <person name="Schmutz J."/>
            <person name="Larimer F."/>
            <person name="Land M."/>
            <person name="Hauser L."/>
            <person name="Kyrpides N."/>
            <person name="Kim E."/>
            <person name="Tomasz A."/>
            <person name="Richardson P."/>
        </authorList>
    </citation>
    <scope>NUCLEOTIDE SEQUENCE [LARGE SCALE GENOMIC DNA]</scope>
    <source>
        <strain>JH9</strain>
    </source>
</reference>
<feature type="chain" id="PRO_1000086357" description="Large ribosomal subunit protein uL2">
    <location>
        <begin position="1"/>
        <end position="277"/>
    </location>
</feature>
<feature type="region of interest" description="Disordered" evidence="2">
    <location>
        <begin position="36"/>
        <end position="55"/>
    </location>
</feature>
<feature type="region of interest" description="Disordered" evidence="2">
    <location>
        <begin position="213"/>
        <end position="277"/>
    </location>
</feature>
<gene>
    <name evidence="1" type="primary">rplB</name>
    <name type="ordered locus">SaurJH9_2274</name>
</gene>
<dbReference type="EMBL" id="CP000703">
    <property type="protein sequence ID" value="ABQ50054.1"/>
    <property type="molecule type" value="Genomic_DNA"/>
</dbReference>
<dbReference type="RefSeq" id="WP_000985472.1">
    <property type="nucleotide sequence ID" value="NC_009487.1"/>
</dbReference>
<dbReference type="SMR" id="A5IV31"/>
<dbReference type="GeneID" id="98346559"/>
<dbReference type="KEGG" id="saj:SaurJH9_2274"/>
<dbReference type="HOGENOM" id="CLU_036235_2_1_9"/>
<dbReference type="GO" id="GO:0015934">
    <property type="term" value="C:large ribosomal subunit"/>
    <property type="evidence" value="ECO:0007669"/>
    <property type="project" value="InterPro"/>
</dbReference>
<dbReference type="GO" id="GO:0019843">
    <property type="term" value="F:rRNA binding"/>
    <property type="evidence" value="ECO:0007669"/>
    <property type="project" value="UniProtKB-UniRule"/>
</dbReference>
<dbReference type="GO" id="GO:0003735">
    <property type="term" value="F:structural constituent of ribosome"/>
    <property type="evidence" value="ECO:0007669"/>
    <property type="project" value="InterPro"/>
</dbReference>
<dbReference type="GO" id="GO:0016740">
    <property type="term" value="F:transferase activity"/>
    <property type="evidence" value="ECO:0007669"/>
    <property type="project" value="InterPro"/>
</dbReference>
<dbReference type="GO" id="GO:0002181">
    <property type="term" value="P:cytoplasmic translation"/>
    <property type="evidence" value="ECO:0007669"/>
    <property type="project" value="TreeGrafter"/>
</dbReference>
<dbReference type="FunFam" id="2.30.30.30:FF:000001">
    <property type="entry name" value="50S ribosomal protein L2"/>
    <property type="match status" value="1"/>
</dbReference>
<dbReference type="FunFam" id="2.40.50.140:FF:000003">
    <property type="entry name" value="50S ribosomal protein L2"/>
    <property type="match status" value="1"/>
</dbReference>
<dbReference type="FunFam" id="4.10.950.10:FF:000001">
    <property type="entry name" value="50S ribosomal protein L2"/>
    <property type="match status" value="1"/>
</dbReference>
<dbReference type="Gene3D" id="2.30.30.30">
    <property type="match status" value="1"/>
</dbReference>
<dbReference type="Gene3D" id="2.40.50.140">
    <property type="entry name" value="Nucleic acid-binding proteins"/>
    <property type="match status" value="1"/>
</dbReference>
<dbReference type="Gene3D" id="4.10.950.10">
    <property type="entry name" value="Ribosomal protein L2, domain 3"/>
    <property type="match status" value="1"/>
</dbReference>
<dbReference type="HAMAP" id="MF_01320_B">
    <property type="entry name" value="Ribosomal_uL2_B"/>
    <property type="match status" value="1"/>
</dbReference>
<dbReference type="InterPro" id="IPR012340">
    <property type="entry name" value="NA-bd_OB-fold"/>
</dbReference>
<dbReference type="InterPro" id="IPR014722">
    <property type="entry name" value="Rib_uL2_dom2"/>
</dbReference>
<dbReference type="InterPro" id="IPR002171">
    <property type="entry name" value="Ribosomal_uL2"/>
</dbReference>
<dbReference type="InterPro" id="IPR005880">
    <property type="entry name" value="Ribosomal_uL2_bac/org-type"/>
</dbReference>
<dbReference type="InterPro" id="IPR022669">
    <property type="entry name" value="Ribosomal_uL2_C"/>
</dbReference>
<dbReference type="InterPro" id="IPR022671">
    <property type="entry name" value="Ribosomal_uL2_CS"/>
</dbReference>
<dbReference type="InterPro" id="IPR014726">
    <property type="entry name" value="Ribosomal_uL2_dom3"/>
</dbReference>
<dbReference type="InterPro" id="IPR022666">
    <property type="entry name" value="Ribosomal_uL2_RNA-bd_dom"/>
</dbReference>
<dbReference type="InterPro" id="IPR008991">
    <property type="entry name" value="Translation_prot_SH3-like_sf"/>
</dbReference>
<dbReference type="NCBIfam" id="TIGR01171">
    <property type="entry name" value="rplB_bact"/>
    <property type="match status" value="1"/>
</dbReference>
<dbReference type="PANTHER" id="PTHR13691:SF5">
    <property type="entry name" value="LARGE RIBOSOMAL SUBUNIT PROTEIN UL2M"/>
    <property type="match status" value="1"/>
</dbReference>
<dbReference type="PANTHER" id="PTHR13691">
    <property type="entry name" value="RIBOSOMAL PROTEIN L2"/>
    <property type="match status" value="1"/>
</dbReference>
<dbReference type="Pfam" id="PF00181">
    <property type="entry name" value="Ribosomal_L2"/>
    <property type="match status" value="1"/>
</dbReference>
<dbReference type="Pfam" id="PF03947">
    <property type="entry name" value="Ribosomal_L2_C"/>
    <property type="match status" value="1"/>
</dbReference>
<dbReference type="PIRSF" id="PIRSF002158">
    <property type="entry name" value="Ribosomal_L2"/>
    <property type="match status" value="1"/>
</dbReference>
<dbReference type="SMART" id="SM01383">
    <property type="entry name" value="Ribosomal_L2"/>
    <property type="match status" value="1"/>
</dbReference>
<dbReference type="SMART" id="SM01382">
    <property type="entry name" value="Ribosomal_L2_C"/>
    <property type="match status" value="1"/>
</dbReference>
<dbReference type="SUPFAM" id="SSF50249">
    <property type="entry name" value="Nucleic acid-binding proteins"/>
    <property type="match status" value="1"/>
</dbReference>
<dbReference type="SUPFAM" id="SSF50104">
    <property type="entry name" value="Translation proteins SH3-like domain"/>
    <property type="match status" value="1"/>
</dbReference>
<dbReference type="PROSITE" id="PS00467">
    <property type="entry name" value="RIBOSOMAL_L2"/>
    <property type="match status" value="1"/>
</dbReference>
<accession>A5IV31</accession>
<sequence length="277" mass="30155">MAIKKYKPITNGRRNMTSLDFAEITKTTPEKSLLKPLPKKAGRNNQGKLTVRHHGGGHKRQYRVIDFKRNKDGINAKVDSIQYDPNRSANIALVVYADGEKRYIIAPKGLEVGQIVESGAEADIKVGNALPLQNIPVGTVVHNIELKPGKGGQIARSAGASAQVLGKEGKYVLIRLRSGEVRMILSTCRATIGQVGNLQHELVNVGKAGRSRWKGIRPTVRGSVMNPNDHPHGGGEGRAPIGRPSPMSPWGKPTLGKKTRRGKKSSDKLIVRGRKKK</sequence>
<comment type="function">
    <text evidence="1">One of the primary rRNA binding proteins. Required for association of the 30S and 50S subunits to form the 70S ribosome, for tRNA binding and peptide bond formation. It has been suggested to have peptidyltransferase activity; this is somewhat controversial. Makes several contacts with the 16S rRNA in the 70S ribosome.</text>
</comment>
<comment type="subunit">
    <text evidence="1">Part of the 50S ribosomal subunit. Forms a bridge to the 30S subunit in the 70S ribosome.</text>
</comment>
<comment type="similarity">
    <text evidence="1">Belongs to the universal ribosomal protein uL2 family.</text>
</comment>
<organism>
    <name type="scientific">Staphylococcus aureus (strain JH9)</name>
    <dbReference type="NCBI Taxonomy" id="359786"/>
    <lineage>
        <taxon>Bacteria</taxon>
        <taxon>Bacillati</taxon>
        <taxon>Bacillota</taxon>
        <taxon>Bacilli</taxon>
        <taxon>Bacillales</taxon>
        <taxon>Staphylococcaceae</taxon>
        <taxon>Staphylococcus</taxon>
    </lineage>
</organism>